<protein>
    <recommendedName>
        <fullName>Mannose-6-phosphate isomerase</fullName>
        <ecNumber>5.3.1.8</ecNumber>
    </recommendedName>
    <alternativeName>
        <fullName>Phosphohexomutase</fullName>
    </alternativeName>
    <alternativeName>
        <fullName>Phosphomannose isomerase</fullName>
        <shortName>PMI</shortName>
    </alternativeName>
</protein>
<evidence type="ECO:0000250" key="1"/>
<evidence type="ECO:0000269" key="2">
    <source>
    </source>
</evidence>
<evidence type="ECO:0000269" key="3">
    <source>
    </source>
</evidence>
<evidence type="ECO:0000305" key="4"/>
<evidence type="ECO:0007744" key="5">
    <source>
    </source>
</evidence>
<gene>
    <name type="primary">PMI40</name>
    <name type="ordered locus">YER003C</name>
</gene>
<reference key="1">
    <citation type="journal article" date="1992" name="Mol. Cell. Biol.">
        <title>PMI40, an intron-containing gene required for early steps in yeast mannosylation.</title>
        <authorList>
            <person name="Smith D.J."/>
            <person name="Proudfoot A.E.I."/>
            <person name="Friedli L."/>
            <person name="Klig L.S."/>
            <person name="Paravicini G."/>
            <person name="Payton M.A."/>
        </authorList>
    </citation>
    <scope>NUCLEOTIDE SEQUENCE [GENOMIC DNA]</scope>
    <scope>PARTIAL PROTEIN SEQUENCE</scope>
    <scope>CLEAVAGE OF INITIATOR METHIONINE</scope>
    <scope>ACETYLATION AT SER-2</scope>
</reference>
<reference key="2">
    <citation type="journal article" date="1997" name="Nature">
        <title>The nucleotide sequence of Saccharomyces cerevisiae chromosome V.</title>
        <authorList>
            <person name="Dietrich F.S."/>
            <person name="Mulligan J.T."/>
            <person name="Hennessy K.M."/>
            <person name="Yelton M.A."/>
            <person name="Allen E."/>
            <person name="Araujo R."/>
            <person name="Aviles E."/>
            <person name="Berno A."/>
            <person name="Brennan T."/>
            <person name="Carpenter J."/>
            <person name="Chen E."/>
            <person name="Cherry J.M."/>
            <person name="Chung E."/>
            <person name="Duncan M."/>
            <person name="Guzman E."/>
            <person name="Hartzell G."/>
            <person name="Hunicke-Smith S."/>
            <person name="Hyman R.W."/>
            <person name="Kayser A."/>
            <person name="Komp C."/>
            <person name="Lashkari D."/>
            <person name="Lew H."/>
            <person name="Lin D."/>
            <person name="Mosedale D."/>
            <person name="Nakahara K."/>
            <person name="Namath A."/>
            <person name="Norgren R."/>
            <person name="Oefner P."/>
            <person name="Oh C."/>
            <person name="Petel F.X."/>
            <person name="Roberts D."/>
            <person name="Sehl P."/>
            <person name="Schramm S."/>
            <person name="Shogren T."/>
            <person name="Smith V."/>
            <person name="Taylor P."/>
            <person name="Wei Y."/>
            <person name="Botstein D."/>
            <person name="Davis R.W."/>
        </authorList>
    </citation>
    <scope>NUCLEOTIDE SEQUENCE [LARGE SCALE GENOMIC DNA]</scope>
    <source>
        <strain>ATCC 204508 / S288c</strain>
    </source>
</reference>
<reference key="3">
    <citation type="journal article" date="2014" name="G3 (Bethesda)">
        <title>The reference genome sequence of Saccharomyces cerevisiae: Then and now.</title>
        <authorList>
            <person name="Engel S.R."/>
            <person name="Dietrich F.S."/>
            <person name="Fisk D.G."/>
            <person name="Binkley G."/>
            <person name="Balakrishnan R."/>
            <person name="Costanzo M.C."/>
            <person name="Dwight S.S."/>
            <person name="Hitz B.C."/>
            <person name="Karra K."/>
            <person name="Nash R.S."/>
            <person name="Weng S."/>
            <person name="Wong E.D."/>
            <person name="Lloyd P."/>
            <person name="Skrzypek M.S."/>
            <person name="Miyasato S.R."/>
            <person name="Simison M."/>
            <person name="Cherry J.M."/>
        </authorList>
    </citation>
    <scope>GENOME REANNOTATION</scope>
    <source>
        <strain>ATCC 204508 / S288c</strain>
    </source>
</reference>
<reference key="4">
    <citation type="journal article" date="1993" name="Biochemistry">
        <title>Phosphomannose isomerase from Saccharomyces cerevisiae contains two inhibitory metal ion binding sites.</title>
        <authorList>
            <person name="Wells T.N.C."/>
            <person name="Coulin F."/>
            <person name="Payton M.A."/>
            <person name="Proudfoot A.E.I."/>
        </authorList>
    </citation>
    <scope>INHIBITION BY ZINC</scope>
</reference>
<reference key="5">
    <citation type="journal article" date="2003" name="Nature">
        <title>Global analysis of protein expression in yeast.</title>
        <authorList>
            <person name="Ghaemmaghami S."/>
            <person name="Huh W.-K."/>
            <person name="Bower K."/>
            <person name="Howson R.W."/>
            <person name="Belle A."/>
            <person name="Dephoure N."/>
            <person name="O'Shea E.K."/>
            <person name="Weissman J.S."/>
        </authorList>
    </citation>
    <scope>LEVEL OF PROTEIN EXPRESSION [LARGE SCALE ANALYSIS]</scope>
</reference>
<reference key="6">
    <citation type="journal article" date="2008" name="Mol. Cell. Proteomics">
        <title>A multidimensional chromatography technology for in-depth phosphoproteome analysis.</title>
        <authorList>
            <person name="Albuquerque C.P."/>
            <person name="Smolka M.B."/>
            <person name="Payne S.H."/>
            <person name="Bafna V."/>
            <person name="Eng J."/>
            <person name="Zhou H."/>
        </authorList>
    </citation>
    <scope>PHOSPHORYLATION [LARGE SCALE ANALYSIS] AT SER-107</scope>
    <scope>IDENTIFICATION BY MASS SPECTROMETRY [LARGE SCALE ANALYSIS]</scope>
</reference>
<accession>P29952</accession>
<accession>D3DLP9</accession>
<comment type="function">
    <text>Involved in the synthesis of the GDP-mannose and dolichol-phosphate-mannose required for a number of critical mannosyl transfer reactions.</text>
</comment>
<comment type="catalytic activity">
    <reaction>
        <text>D-mannose 6-phosphate = D-fructose 6-phosphate</text>
        <dbReference type="Rhea" id="RHEA:12356"/>
        <dbReference type="ChEBI" id="CHEBI:58735"/>
        <dbReference type="ChEBI" id="CHEBI:61527"/>
        <dbReference type="EC" id="5.3.1.8"/>
    </reaction>
</comment>
<comment type="cofactor">
    <cofactor>
        <name>Zn(2+)</name>
        <dbReference type="ChEBI" id="CHEBI:29105"/>
    </cofactor>
    <text>Binds 1 zinc ion per subunit.</text>
</comment>
<comment type="activity regulation">
    <text>Can be inhibited by an excess of zinc.</text>
</comment>
<comment type="pathway">
    <text>Nucleotide-sugar biosynthesis; GDP-alpha-D-mannose biosynthesis; alpha-D-mannose 1-phosphate from D-fructose 6-phosphate: step 1/2.</text>
</comment>
<comment type="subunit">
    <text>Monomer.</text>
</comment>
<comment type="subcellular location">
    <subcellularLocation>
        <location>Cytoplasm</location>
    </subcellularLocation>
</comment>
<comment type="induction">
    <text>By D-mannose.</text>
</comment>
<comment type="miscellaneous">
    <text evidence="3">Present with 5220 molecules/cell in log phase SD medium.</text>
</comment>
<comment type="similarity">
    <text evidence="4">Belongs to the mannose-6-phosphate isomerase type 1 family.</text>
</comment>
<keyword id="KW-0007">Acetylation</keyword>
<keyword id="KW-0963">Cytoplasm</keyword>
<keyword id="KW-0903">Direct protein sequencing</keyword>
<keyword id="KW-0413">Isomerase</keyword>
<keyword id="KW-0479">Metal-binding</keyword>
<keyword id="KW-0597">Phosphoprotein</keyword>
<keyword id="KW-1185">Reference proteome</keyword>
<keyword id="KW-0862">Zinc</keyword>
<organism>
    <name type="scientific">Saccharomyces cerevisiae (strain ATCC 204508 / S288c)</name>
    <name type="common">Baker's yeast</name>
    <dbReference type="NCBI Taxonomy" id="559292"/>
    <lineage>
        <taxon>Eukaryota</taxon>
        <taxon>Fungi</taxon>
        <taxon>Dikarya</taxon>
        <taxon>Ascomycota</taxon>
        <taxon>Saccharomycotina</taxon>
        <taxon>Saccharomycetes</taxon>
        <taxon>Saccharomycetales</taxon>
        <taxon>Saccharomycetaceae</taxon>
        <taxon>Saccharomyces</taxon>
    </lineage>
</organism>
<sequence>MSNKLFRLDAGYQQYDWGKIGSSSAVAQFAAHSDPSVQIEQDKPYAELWMGTHSKMPSYNHESKESLRDIISKNPSAMLGKDIIDKFHATNELPFLFKVLSIEKVLSIQAHPDKALGKILHAQDPKNYPDDNHKPEMAIAVTDFEGFCGFKPLQEIADELKRIPELRNIVGEETSRNFIENIQPSAQKGSPEDEQNKKLLQAVFSRVMNASDDKIKIQARSLVERSKNSPSDFNKPDLPELIQRLNKQFPDDVGLFCGCLLLNHCRLNAGEAIFLRAKDPHAYISGDIMECMAASDNVVRAGFTPKFKDVKNLVSMLTYTYDPVEKQKMQPLKFDRSSGNGKSVLYNPPIEEFAVLETTFDEKLGQRHFEGVDGPSILITTKGNGYIKADGQKLKAEPGFVFFIAPHLPVDLEAEDEAFTTYRAFVEPN</sequence>
<dbReference type="EC" id="5.3.1.8"/>
<dbReference type="EMBL" id="M85238">
    <property type="protein sequence ID" value="AAA34872.1"/>
    <property type="molecule type" value="Genomic_DNA"/>
</dbReference>
<dbReference type="EMBL" id="U18778">
    <property type="protein sequence ID" value="AAB64536.1"/>
    <property type="molecule type" value="Genomic_DNA"/>
</dbReference>
<dbReference type="EMBL" id="BK006939">
    <property type="protein sequence ID" value="DAA07653.1"/>
    <property type="molecule type" value="Genomic_DNA"/>
</dbReference>
<dbReference type="PIR" id="S50461">
    <property type="entry name" value="S50461"/>
</dbReference>
<dbReference type="RefSeq" id="NP_010918.1">
    <property type="nucleotide sequence ID" value="NM_001178894.1"/>
</dbReference>
<dbReference type="SMR" id="P29952"/>
<dbReference type="BioGRID" id="36733">
    <property type="interactions" value="400"/>
</dbReference>
<dbReference type="DIP" id="DIP-6619N"/>
<dbReference type="FunCoup" id="P29952">
    <property type="interactions" value="1025"/>
</dbReference>
<dbReference type="IntAct" id="P29952">
    <property type="interactions" value="5"/>
</dbReference>
<dbReference type="MINT" id="P29952"/>
<dbReference type="STRING" id="4932.YER003C"/>
<dbReference type="BindingDB" id="P29952"/>
<dbReference type="ChEMBL" id="CHEMBL3308954"/>
<dbReference type="CarbonylDB" id="P29952"/>
<dbReference type="iPTMnet" id="P29952"/>
<dbReference type="PaxDb" id="4932-YER003C"/>
<dbReference type="PeptideAtlas" id="P29952"/>
<dbReference type="EnsemblFungi" id="YER003C_mRNA">
    <property type="protein sequence ID" value="YER003C"/>
    <property type="gene ID" value="YER003C"/>
</dbReference>
<dbReference type="GeneID" id="856720"/>
<dbReference type="KEGG" id="sce:YER003C"/>
<dbReference type="AGR" id="SGD:S000000805"/>
<dbReference type="SGD" id="S000000805">
    <property type="gene designation" value="PMI40"/>
</dbReference>
<dbReference type="VEuPathDB" id="FungiDB:YER003C"/>
<dbReference type="eggNOG" id="KOG2757">
    <property type="taxonomic scope" value="Eukaryota"/>
</dbReference>
<dbReference type="GeneTree" id="ENSGT00390000016075"/>
<dbReference type="HOGENOM" id="CLU_026967_0_0_1"/>
<dbReference type="InParanoid" id="P29952"/>
<dbReference type="OMA" id="DIGLFCG"/>
<dbReference type="OrthoDB" id="6605218at2759"/>
<dbReference type="BioCyc" id="YEAST:YER003C-MONOMER"/>
<dbReference type="Reactome" id="R-SCE-446205">
    <property type="pathway name" value="Synthesis of GDP-mannose"/>
</dbReference>
<dbReference type="SABIO-RK" id="P29952"/>
<dbReference type="UniPathway" id="UPA00126">
    <property type="reaction ID" value="UER00423"/>
</dbReference>
<dbReference type="BioGRID-ORCS" id="856720">
    <property type="hits" value="10 hits in 10 CRISPR screens"/>
</dbReference>
<dbReference type="PRO" id="PR:P29952"/>
<dbReference type="Proteomes" id="UP000002311">
    <property type="component" value="Chromosome V"/>
</dbReference>
<dbReference type="RNAct" id="P29952">
    <property type="molecule type" value="protein"/>
</dbReference>
<dbReference type="GO" id="GO:0005737">
    <property type="term" value="C:cytoplasm"/>
    <property type="evidence" value="ECO:0007005"/>
    <property type="project" value="SGD"/>
</dbReference>
<dbReference type="GO" id="GO:0005829">
    <property type="term" value="C:cytosol"/>
    <property type="evidence" value="ECO:0000318"/>
    <property type="project" value="GO_Central"/>
</dbReference>
<dbReference type="GO" id="GO:0005634">
    <property type="term" value="C:nucleus"/>
    <property type="evidence" value="ECO:0007005"/>
    <property type="project" value="SGD"/>
</dbReference>
<dbReference type="GO" id="GO:0004476">
    <property type="term" value="F:mannose-6-phosphate isomerase activity"/>
    <property type="evidence" value="ECO:0000314"/>
    <property type="project" value="SGD"/>
</dbReference>
<dbReference type="GO" id="GO:0008270">
    <property type="term" value="F:zinc ion binding"/>
    <property type="evidence" value="ECO:0007669"/>
    <property type="project" value="InterPro"/>
</dbReference>
<dbReference type="GO" id="GO:0005975">
    <property type="term" value="P:carbohydrate metabolic process"/>
    <property type="evidence" value="ECO:0007669"/>
    <property type="project" value="InterPro"/>
</dbReference>
<dbReference type="GO" id="GO:0000032">
    <property type="term" value="P:cell wall mannoprotein biosynthetic process"/>
    <property type="evidence" value="ECO:0000315"/>
    <property type="project" value="SGD"/>
</dbReference>
<dbReference type="GO" id="GO:0009298">
    <property type="term" value="P:GDP-mannose biosynthetic process"/>
    <property type="evidence" value="ECO:0000315"/>
    <property type="project" value="SGD"/>
</dbReference>
<dbReference type="GO" id="GO:0006486">
    <property type="term" value="P:protein glycosylation"/>
    <property type="evidence" value="ECO:0000315"/>
    <property type="project" value="SGD"/>
</dbReference>
<dbReference type="CDD" id="cd07011">
    <property type="entry name" value="cupin_PMI_type_I_N"/>
    <property type="match status" value="1"/>
</dbReference>
<dbReference type="FunFam" id="1.10.441.10:FF:000001">
    <property type="entry name" value="Mannose-6-phosphate isomerase"/>
    <property type="match status" value="1"/>
</dbReference>
<dbReference type="FunFam" id="2.60.120.10:FF:000187">
    <property type="entry name" value="Mannose-6-phosphate isomerase"/>
    <property type="match status" value="1"/>
</dbReference>
<dbReference type="Gene3D" id="2.60.120.10">
    <property type="entry name" value="Jelly Rolls"/>
    <property type="match status" value="2"/>
</dbReference>
<dbReference type="Gene3D" id="1.10.441.10">
    <property type="entry name" value="Phosphomannose Isomerase, domain 2"/>
    <property type="match status" value="1"/>
</dbReference>
<dbReference type="InterPro" id="IPR001250">
    <property type="entry name" value="Man6P_Isoase-1"/>
</dbReference>
<dbReference type="InterPro" id="IPR016305">
    <property type="entry name" value="Mannose-6-P_Isomerase"/>
</dbReference>
<dbReference type="InterPro" id="IPR018050">
    <property type="entry name" value="Pmannose_isomerase-type1_CS"/>
</dbReference>
<dbReference type="InterPro" id="IPR046456">
    <property type="entry name" value="PMI_typeI_C"/>
</dbReference>
<dbReference type="InterPro" id="IPR046457">
    <property type="entry name" value="PMI_typeI_cat"/>
</dbReference>
<dbReference type="InterPro" id="IPR046458">
    <property type="entry name" value="PMI_typeI_hel"/>
</dbReference>
<dbReference type="InterPro" id="IPR014710">
    <property type="entry name" value="RmlC-like_jellyroll"/>
</dbReference>
<dbReference type="InterPro" id="IPR011051">
    <property type="entry name" value="RmlC_Cupin_sf"/>
</dbReference>
<dbReference type="NCBIfam" id="TIGR00218">
    <property type="entry name" value="manA"/>
    <property type="match status" value="1"/>
</dbReference>
<dbReference type="PANTHER" id="PTHR10309">
    <property type="entry name" value="MANNOSE-6-PHOSPHATE ISOMERASE"/>
    <property type="match status" value="1"/>
</dbReference>
<dbReference type="PANTHER" id="PTHR10309:SF0">
    <property type="entry name" value="MANNOSE-6-PHOSPHATE ISOMERASE"/>
    <property type="match status" value="1"/>
</dbReference>
<dbReference type="Pfam" id="PF01238">
    <property type="entry name" value="PMI_typeI_C"/>
    <property type="match status" value="1"/>
</dbReference>
<dbReference type="Pfam" id="PF20511">
    <property type="entry name" value="PMI_typeI_cat"/>
    <property type="match status" value="1"/>
</dbReference>
<dbReference type="Pfam" id="PF20512">
    <property type="entry name" value="PMI_typeI_hel"/>
    <property type="match status" value="1"/>
</dbReference>
<dbReference type="PIRSF" id="PIRSF001480">
    <property type="entry name" value="Mannose-6-phosphate_isomerase"/>
    <property type="match status" value="1"/>
</dbReference>
<dbReference type="PRINTS" id="PR00714">
    <property type="entry name" value="MAN6PISMRASE"/>
</dbReference>
<dbReference type="SUPFAM" id="SSF51182">
    <property type="entry name" value="RmlC-like cupins"/>
    <property type="match status" value="1"/>
</dbReference>
<dbReference type="PROSITE" id="PS00965">
    <property type="entry name" value="PMI_I_1"/>
    <property type="match status" value="1"/>
</dbReference>
<dbReference type="PROSITE" id="PS00966">
    <property type="entry name" value="PMI_I_2"/>
    <property type="match status" value="1"/>
</dbReference>
<proteinExistence type="evidence at protein level"/>
<name>MPI_YEAST</name>
<feature type="initiator methionine" description="Removed" evidence="2">
    <location>
        <position position="1"/>
    </location>
</feature>
<feature type="chain" id="PRO_0000194247" description="Mannose-6-phosphate isomerase">
    <location>
        <begin position="2"/>
        <end position="429"/>
    </location>
</feature>
<feature type="active site" evidence="1">
    <location>
        <position position="300"/>
    </location>
</feature>
<feature type="binding site" evidence="1">
    <location>
        <position position="109"/>
    </location>
    <ligand>
        <name>Zn(2+)</name>
        <dbReference type="ChEBI" id="CHEBI:29105"/>
    </ligand>
</feature>
<feature type="binding site" evidence="1">
    <location>
        <position position="111"/>
    </location>
    <ligand>
        <name>Zn(2+)</name>
        <dbReference type="ChEBI" id="CHEBI:29105"/>
    </ligand>
</feature>
<feature type="binding site" evidence="1">
    <location>
        <position position="136"/>
    </location>
    <ligand>
        <name>Zn(2+)</name>
        <dbReference type="ChEBI" id="CHEBI:29105"/>
    </ligand>
</feature>
<feature type="binding site" evidence="1">
    <location>
        <position position="281"/>
    </location>
    <ligand>
        <name>Zn(2+)</name>
        <dbReference type="ChEBI" id="CHEBI:29105"/>
    </ligand>
</feature>
<feature type="modified residue" description="N-acetylserine" evidence="2">
    <location>
        <position position="2"/>
    </location>
</feature>
<feature type="modified residue" description="Phosphoserine" evidence="5">
    <location>
        <position position="107"/>
    </location>
</feature>
<feature type="sequence conflict" description="In Ref. 1; AAA34872." evidence="4" ref="1">
    <original>A</original>
    <variation>R</variation>
    <location>
        <position position="25"/>
    </location>
</feature>